<gene>
    <name evidence="1" type="primary">lipB</name>
    <name type="ordered locus">Hhal_1015</name>
</gene>
<name>LIPB_HALHL</name>
<accession>A1WVS9</accession>
<organism>
    <name type="scientific">Halorhodospira halophila (strain DSM 244 / SL1)</name>
    <name type="common">Ectothiorhodospira halophila (strain DSM 244 / SL1)</name>
    <dbReference type="NCBI Taxonomy" id="349124"/>
    <lineage>
        <taxon>Bacteria</taxon>
        <taxon>Pseudomonadati</taxon>
        <taxon>Pseudomonadota</taxon>
        <taxon>Gammaproteobacteria</taxon>
        <taxon>Chromatiales</taxon>
        <taxon>Ectothiorhodospiraceae</taxon>
        <taxon>Halorhodospira</taxon>
    </lineage>
</organism>
<feature type="chain" id="PRO_0000321637" description="Octanoyltransferase">
    <location>
        <begin position="1"/>
        <end position="217"/>
    </location>
</feature>
<feature type="domain" description="BPL/LPL catalytic" evidence="2">
    <location>
        <begin position="34"/>
        <end position="216"/>
    </location>
</feature>
<feature type="active site" description="Acyl-thioester intermediate" evidence="1">
    <location>
        <position position="171"/>
    </location>
</feature>
<feature type="binding site" evidence="1">
    <location>
        <begin position="73"/>
        <end position="80"/>
    </location>
    <ligand>
        <name>substrate</name>
    </ligand>
</feature>
<feature type="binding site" evidence="1">
    <location>
        <begin position="140"/>
        <end position="142"/>
    </location>
    <ligand>
        <name>substrate</name>
    </ligand>
</feature>
<feature type="binding site" evidence="1">
    <location>
        <begin position="153"/>
        <end position="155"/>
    </location>
    <ligand>
        <name>substrate</name>
    </ligand>
</feature>
<feature type="site" description="Lowers pKa of active site Cys" evidence="1">
    <location>
        <position position="137"/>
    </location>
</feature>
<reference key="1">
    <citation type="submission" date="2006-12" db="EMBL/GenBank/DDBJ databases">
        <title>Complete sequence of Halorhodospira halophila SL1.</title>
        <authorList>
            <consortium name="US DOE Joint Genome Institute"/>
            <person name="Copeland A."/>
            <person name="Lucas S."/>
            <person name="Lapidus A."/>
            <person name="Barry K."/>
            <person name="Detter J.C."/>
            <person name="Glavina del Rio T."/>
            <person name="Hammon N."/>
            <person name="Israni S."/>
            <person name="Dalin E."/>
            <person name="Tice H."/>
            <person name="Pitluck S."/>
            <person name="Saunders E."/>
            <person name="Brettin T."/>
            <person name="Bruce D."/>
            <person name="Han C."/>
            <person name="Tapia R."/>
            <person name="Schmutz J."/>
            <person name="Larimer F."/>
            <person name="Land M."/>
            <person name="Hauser L."/>
            <person name="Kyrpides N."/>
            <person name="Mikhailova N."/>
            <person name="Hoff W."/>
            <person name="Richardson P."/>
        </authorList>
    </citation>
    <scope>NUCLEOTIDE SEQUENCE [LARGE SCALE GENOMIC DNA]</scope>
    <source>
        <strain>DSM 244 / SL1</strain>
    </source>
</reference>
<sequence>MPCALEHIHTRYLGEQPYEPTWTAMRTFTEERSSETRDELWLLQHPPVYTLGQAGRPEHILDTGETPVVHTDRGGQVTWHGPGQLVAYPLLDLRRWGLGVRTLVHALEQSVVSLLAAYGVPSHRREDAPGVYVDGAKVAALGIRVRRGCSYHGLSLNVCNDPAPFERIHPCGYAGLTTTRVHDLGITTPLDRLEVELGIYLLQAIDAASRASRHDRA</sequence>
<proteinExistence type="inferred from homology"/>
<evidence type="ECO:0000255" key="1">
    <source>
        <dbReference type="HAMAP-Rule" id="MF_00013"/>
    </source>
</evidence>
<evidence type="ECO:0000255" key="2">
    <source>
        <dbReference type="PROSITE-ProRule" id="PRU01067"/>
    </source>
</evidence>
<protein>
    <recommendedName>
        <fullName evidence="1">Octanoyltransferase</fullName>
        <ecNumber evidence="1">2.3.1.181</ecNumber>
    </recommendedName>
    <alternativeName>
        <fullName evidence="1">Lipoate-protein ligase B</fullName>
    </alternativeName>
    <alternativeName>
        <fullName evidence="1">Lipoyl/octanoyl transferase</fullName>
    </alternativeName>
    <alternativeName>
        <fullName evidence="1">Octanoyl-[acyl-carrier-protein]-protein N-octanoyltransferase</fullName>
    </alternativeName>
</protein>
<comment type="function">
    <text evidence="1">Catalyzes the transfer of endogenously produced octanoic acid from octanoyl-acyl-carrier-protein onto the lipoyl domains of lipoate-dependent enzymes. Lipoyl-ACP can also act as a substrate although octanoyl-ACP is likely to be the physiological substrate.</text>
</comment>
<comment type="catalytic activity">
    <reaction evidence="1">
        <text>octanoyl-[ACP] + L-lysyl-[protein] = N(6)-octanoyl-L-lysyl-[protein] + holo-[ACP] + H(+)</text>
        <dbReference type="Rhea" id="RHEA:17665"/>
        <dbReference type="Rhea" id="RHEA-COMP:9636"/>
        <dbReference type="Rhea" id="RHEA-COMP:9685"/>
        <dbReference type="Rhea" id="RHEA-COMP:9752"/>
        <dbReference type="Rhea" id="RHEA-COMP:9928"/>
        <dbReference type="ChEBI" id="CHEBI:15378"/>
        <dbReference type="ChEBI" id="CHEBI:29969"/>
        <dbReference type="ChEBI" id="CHEBI:64479"/>
        <dbReference type="ChEBI" id="CHEBI:78463"/>
        <dbReference type="ChEBI" id="CHEBI:78809"/>
        <dbReference type="EC" id="2.3.1.181"/>
    </reaction>
</comment>
<comment type="pathway">
    <text evidence="1">Protein modification; protein lipoylation via endogenous pathway; protein N(6)-(lipoyl)lysine from octanoyl-[acyl-carrier-protein]: step 1/2.</text>
</comment>
<comment type="subcellular location">
    <subcellularLocation>
        <location evidence="1">Cytoplasm</location>
    </subcellularLocation>
</comment>
<comment type="miscellaneous">
    <text evidence="1">In the reaction, the free carboxyl group of octanoic acid is attached via an amide linkage to the epsilon-amino group of a specific lysine residue of lipoyl domains of lipoate-dependent enzymes.</text>
</comment>
<comment type="similarity">
    <text evidence="1">Belongs to the LipB family.</text>
</comment>
<keyword id="KW-0012">Acyltransferase</keyword>
<keyword id="KW-0963">Cytoplasm</keyword>
<keyword id="KW-1185">Reference proteome</keyword>
<keyword id="KW-0808">Transferase</keyword>
<dbReference type="EC" id="2.3.1.181" evidence="1"/>
<dbReference type="EMBL" id="CP000544">
    <property type="protein sequence ID" value="ABM61791.1"/>
    <property type="molecule type" value="Genomic_DNA"/>
</dbReference>
<dbReference type="RefSeq" id="WP_011813814.1">
    <property type="nucleotide sequence ID" value="NC_008789.1"/>
</dbReference>
<dbReference type="SMR" id="A1WVS9"/>
<dbReference type="STRING" id="349124.Hhal_1015"/>
<dbReference type="KEGG" id="hha:Hhal_1015"/>
<dbReference type="eggNOG" id="COG0321">
    <property type="taxonomic scope" value="Bacteria"/>
</dbReference>
<dbReference type="HOGENOM" id="CLU_035168_3_1_6"/>
<dbReference type="OrthoDB" id="9787061at2"/>
<dbReference type="UniPathway" id="UPA00538">
    <property type="reaction ID" value="UER00592"/>
</dbReference>
<dbReference type="Proteomes" id="UP000000647">
    <property type="component" value="Chromosome"/>
</dbReference>
<dbReference type="GO" id="GO:0005737">
    <property type="term" value="C:cytoplasm"/>
    <property type="evidence" value="ECO:0007669"/>
    <property type="project" value="UniProtKB-SubCell"/>
</dbReference>
<dbReference type="GO" id="GO:0033819">
    <property type="term" value="F:lipoyl(octanoyl) transferase activity"/>
    <property type="evidence" value="ECO:0007669"/>
    <property type="project" value="UniProtKB-EC"/>
</dbReference>
<dbReference type="GO" id="GO:0036211">
    <property type="term" value="P:protein modification process"/>
    <property type="evidence" value="ECO:0007669"/>
    <property type="project" value="InterPro"/>
</dbReference>
<dbReference type="CDD" id="cd16444">
    <property type="entry name" value="LipB"/>
    <property type="match status" value="1"/>
</dbReference>
<dbReference type="FunFam" id="3.30.930.10:FF:000020">
    <property type="entry name" value="Octanoyltransferase"/>
    <property type="match status" value="1"/>
</dbReference>
<dbReference type="Gene3D" id="3.30.930.10">
    <property type="entry name" value="Bira Bifunctional Protein, Domain 2"/>
    <property type="match status" value="1"/>
</dbReference>
<dbReference type="HAMAP" id="MF_00013">
    <property type="entry name" value="LipB"/>
    <property type="match status" value="1"/>
</dbReference>
<dbReference type="InterPro" id="IPR045864">
    <property type="entry name" value="aa-tRNA-synth_II/BPL/LPL"/>
</dbReference>
<dbReference type="InterPro" id="IPR004143">
    <property type="entry name" value="BPL_LPL_catalytic"/>
</dbReference>
<dbReference type="InterPro" id="IPR000544">
    <property type="entry name" value="Octanoyltransferase"/>
</dbReference>
<dbReference type="InterPro" id="IPR020605">
    <property type="entry name" value="Octanoyltransferase_CS"/>
</dbReference>
<dbReference type="NCBIfam" id="TIGR00214">
    <property type="entry name" value="lipB"/>
    <property type="match status" value="1"/>
</dbReference>
<dbReference type="NCBIfam" id="NF010922">
    <property type="entry name" value="PRK14342.1"/>
    <property type="match status" value="1"/>
</dbReference>
<dbReference type="PANTHER" id="PTHR10993:SF7">
    <property type="entry name" value="LIPOYLTRANSFERASE 2, MITOCHONDRIAL-RELATED"/>
    <property type="match status" value="1"/>
</dbReference>
<dbReference type="PANTHER" id="PTHR10993">
    <property type="entry name" value="OCTANOYLTRANSFERASE"/>
    <property type="match status" value="1"/>
</dbReference>
<dbReference type="Pfam" id="PF21948">
    <property type="entry name" value="LplA-B_cat"/>
    <property type="match status" value="1"/>
</dbReference>
<dbReference type="PIRSF" id="PIRSF016262">
    <property type="entry name" value="LPLase"/>
    <property type="match status" value="1"/>
</dbReference>
<dbReference type="SUPFAM" id="SSF55681">
    <property type="entry name" value="Class II aaRS and biotin synthetases"/>
    <property type="match status" value="1"/>
</dbReference>
<dbReference type="PROSITE" id="PS51733">
    <property type="entry name" value="BPL_LPL_CATALYTIC"/>
    <property type="match status" value="1"/>
</dbReference>
<dbReference type="PROSITE" id="PS01313">
    <property type="entry name" value="LIPB"/>
    <property type="match status" value="1"/>
</dbReference>